<keyword id="KW-0687">Ribonucleoprotein</keyword>
<keyword id="KW-0689">Ribosomal protein</keyword>
<keyword id="KW-0694">RNA-binding</keyword>
<keyword id="KW-0699">rRNA-binding</keyword>
<name>RS15_PROMP</name>
<comment type="function">
    <text evidence="1">One of the primary rRNA binding proteins, it binds directly to 16S rRNA where it helps nucleate assembly of the platform of the 30S subunit by binding and bridging several RNA helices of the 16S rRNA.</text>
</comment>
<comment type="function">
    <text evidence="1">Forms an intersubunit bridge (bridge B4) with the 23S rRNA of the 50S subunit in the ribosome.</text>
</comment>
<comment type="subunit">
    <text evidence="1">Part of the 30S ribosomal subunit. Forms a bridge to the 50S subunit in the 70S ribosome, contacting the 23S rRNA.</text>
</comment>
<comment type="similarity">
    <text evidence="1">Belongs to the universal ribosomal protein uS15 family.</text>
</comment>
<accession>Q7TU92</accession>
<sequence length="89" mass="10072">MTLDTAEKQKLIESHQVHATDTGSVEVQVAMLSERISKLSDHLQGNIHDYASRQGLLKMIGKRKRLLSYIKGKNPQNYQDLIKKIGIRG</sequence>
<evidence type="ECO:0000255" key="1">
    <source>
        <dbReference type="HAMAP-Rule" id="MF_01343"/>
    </source>
</evidence>
<evidence type="ECO:0000305" key="2"/>
<proteinExistence type="inferred from homology"/>
<protein>
    <recommendedName>
        <fullName evidence="1">Small ribosomal subunit protein uS15</fullName>
    </recommendedName>
    <alternativeName>
        <fullName evidence="2">30S ribosomal protein S15</fullName>
    </alternativeName>
</protein>
<feature type="chain" id="PRO_0000115507" description="Small ribosomal subunit protein uS15">
    <location>
        <begin position="1"/>
        <end position="89"/>
    </location>
</feature>
<dbReference type="EMBL" id="BX548174">
    <property type="protein sequence ID" value="CAE19402.1"/>
    <property type="molecule type" value="Genomic_DNA"/>
</dbReference>
<dbReference type="RefSeq" id="WP_011132576.1">
    <property type="nucleotide sequence ID" value="NC_005072.1"/>
</dbReference>
<dbReference type="SMR" id="Q7TU92"/>
<dbReference type="STRING" id="59919.PMM0943"/>
<dbReference type="KEGG" id="pmm:PMM0943"/>
<dbReference type="eggNOG" id="COG0184">
    <property type="taxonomic scope" value="Bacteria"/>
</dbReference>
<dbReference type="HOGENOM" id="CLU_148518_0_0_3"/>
<dbReference type="OrthoDB" id="9799262at2"/>
<dbReference type="Proteomes" id="UP000001026">
    <property type="component" value="Chromosome"/>
</dbReference>
<dbReference type="GO" id="GO:0022627">
    <property type="term" value="C:cytosolic small ribosomal subunit"/>
    <property type="evidence" value="ECO:0007669"/>
    <property type="project" value="TreeGrafter"/>
</dbReference>
<dbReference type="GO" id="GO:0019843">
    <property type="term" value="F:rRNA binding"/>
    <property type="evidence" value="ECO:0007669"/>
    <property type="project" value="UniProtKB-UniRule"/>
</dbReference>
<dbReference type="GO" id="GO:0003735">
    <property type="term" value="F:structural constituent of ribosome"/>
    <property type="evidence" value="ECO:0007669"/>
    <property type="project" value="InterPro"/>
</dbReference>
<dbReference type="GO" id="GO:0006412">
    <property type="term" value="P:translation"/>
    <property type="evidence" value="ECO:0007669"/>
    <property type="project" value="UniProtKB-UniRule"/>
</dbReference>
<dbReference type="CDD" id="cd00353">
    <property type="entry name" value="Ribosomal_S15p_S13e"/>
    <property type="match status" value="1"/>
</dbReference>
<dbReference type="FunFam" id="1.10.287.10:FF:000002">
    <property type="entry name" value="30S ribosomal protein S15"/>
    <property type="match status" value="1"/>
</dbReference>
<dbReference type="Gene3D" id="6.10.250.3130">
    <property type="match status" value="1"/>
</dbReference>
<dbReference type="Gene3D" id="1.10.287.10">
    <property type="entry name" value="S15/NS1, RNA-binding"/>
    <property type="match status" value="1"/>
</dbReference>
<dbReference type="HAMAP" id="MF_01343_B">
    <property type="entry name" value="Ribosomal_uS15_B"/>
    <property type="match status" value="1"/>
</dbReference>
<dbReference type="InterPro" id="IPR000589">
    <property type="entry name" value="Ribosomal_uS15"/>
</dbReference>
<dbReference type="InterPro" id="IPR005290">
    <property type="entry name" value="Ribosomal_uS15_bac-type"/>
</dbReference>
<dbReference type="InterPro" id="IPR009068">
    <property type="entry name" value="uS15_NS1_RNA-bd_sf"/>
</dbReference>
<dbReference type="NCBIfam" id="TIGR00952">
    <property type="entry name" value="S15_bact"/>
    <property type="match status" value="1"/>
</dbReference>
<dbReference type="PANTHER" id="PTHR23321">
    <property type="entry name" value="RIBOSOMAL PROTEIN S15, BACTERIAL AND ORGANELLAR"/>
    <property type="match status" value="1"/>
</dbReference>
<dbReference type="PANTHER" id="PTHR23321:SF26">
    <property type="entry name" value="SMALL RIBOSOMAL SUBUNIT PROTEIN US15M"/>
    <property type="match status" value="1"/>
</dbReference>
<dbReference type="Pfam" id="PF00312">
    <property type="entry name" value="Ribosomal_S15"/>
    <property type="match status" value="1"/>
</dbReference>
<dbReference type="SMART" id="SM01387">
    <property type="entry name" value="Ribosomal_S15"/>
    <property type="match status" value="1"/>
</dbReference>
<dbReference type="SUPFAM" id="SSF47060">
    <property type="entry name" value="S15/NS1 RNA-binding domain"/>
    <property type="match status" value="1"/>
</dbReference>
<dbReference type="PROSITE" id="PS00362">
    <property type="entry name" value="RIBOSOMAL_S15"/>
    <property type="match status" value="1"/>
</dbReference>
<reference key="1">
    <citation type="journal article" date="2003" name="Nature">
        <title>Genome divergence in two Prochlorococcus ecotypes reflects oceanic niche differentiation.</title>
        <authorList>
            <person name="Rocap G."/>
            <person name="Larimer F.W."/>
            <person name="Lamerdin J.E."/>
            <person name="Malfatti S."/>
            <person name="Chain P."/>
            <person name="Ahlgren N.A."/>
            <person name="Arellano A."/>
            <person name="Coleman M."/>
            <person name="Hauser L."/>
            <person name="Hess W.R."/>
            <person name="Johnson Z.I."/>
            <person name="Land M.L."/>
            <person name="Lindell D."/>
            <person name="Post A.F."/>
            <person name="Regala W."/>
            <person name="Shah M."/>
            <person name="Shaw S.L."/>
            <person name="Steglich C."/>
            <person name="Sullivan M.B."/>
            <person name="Ting C.S."/>
            <person name="Tolonen A."/>
            <person name="Webb E.A."/>
            <person name="Zinser E.R."/>
            <person name="Chisholm S.W."/>
        </authorList>
    </citation>
    <scope>NUCLEOTIDE SEQUENCE [LARGE SCALE GENOMIC DNA]</scope>
    <source>
        <strain>CCMP1986 / NIES-2087 / MED4</strain>
    </source>
</reference>
<organism>
    <name type="scientific">Prochlorococcus marinus subsp. pastoris (strain CCMP1986 / NIES-2087 / MED4)</name>
    <dbReference type="NCBI Taxonomy" id="59919"/>
    <lineage>
        <taxon>Bacteria</taxon>
        <taxon>Bacillati</taxon>
        <taxon>Cyanobacteriota</taxon>
        <taxon>Cyanophyceae</taxon>
        <taxon>Synechococcales</taxon>
        <taxon>Prochlorococcaceae</taxon>
        <taxon>Prochlorococcus</taxon>
    </lineage>
</organism>
<gene>
    <name evidence="1" type="primary">rpsO</name>
    <name evidence="1" type="synonym">rps15</name>
    <name type="ordered locus">PMM0943</name>
</gene>